<gene>
    <name evidence="1" type="primary">hemL</name>
    <name type="ordered locus">YpsIP31758_3330</name>
</gene>
<reference key="1">
    <citation type="journal article" date="2007" name="PLoS Genet.">
        <title>The complete genome sequence of Yersinia pseudotuberculosis IP31758, the causative agent of Far East scarlet-like fever.</title>
        <authorList>
            <person name="Eppinger M."/>
            <person name="Rosovitz M.J."/>
            <person name="Fricke W.F."/>
            <person name="Rasko D.A."/>
            <person name="Kokorina G."/>
            <person name="Fayolle C."/>
            <person name="Lindler L.E."/>
            <person name="Carniel E."/>
            <person name="Ravel J."/>
        </authorList>
    </citation>
    <scope>NUCLEOTIDE SEQUENCE [LARGE SCALE GENOMIC DNA]</scope>
    <source>
        <strain>IP 31758</strain>
    </source>
</reference>
<accession>A7FM09</accession>
<name>GSA_YERP3</name>
<sequence length="426" mass="45764">MSKSENLYAQAQQLIPGGVNSPVRAFTGVGGIPLFIERADGAYLFDVDGKAYIDYVGSWGPMILGHNHPAIRQAVIEAVERGLSFGAPTEMEVKMAQLVTDLVPTMDMVRMVNSGTEATMSAIRLARGYTGRDKIIKFEGCYHGHADCLLVKAGSGALTLGQPNSPGVPADFAKHTLTCTYNDLASVRQAFEQYPQEVACIIVEPVAGNMNCIPPLPEFLPGLRALCDEFGALLIIDEVMTGFRVALAGAQDYYHVIPDLTCLGKIIGGGMPVGAFGGRREVMNALAPTGPVYQAGTLSGNPIAMAAGFACLTEISQVGVYETLTELTDSLATGLRHAAKEENIPLVVNHVGGMFGLFFTNADTVTCYQDVMNCDVERFKRFFHLMLEEGVYLAPSAFEAGFMSLAHSNEDIQKTVNAARRCFAKL</sequence>
<proteinExistence type="inferred from homology"/>
<comment type="catalytic activity">
    <reaction evidence="1">
        <text>(S)-4-amino-5-oxopentanoate = 5-aminolevulinate</text>
        <dbReference type="Rhea" id="RHEA:14265"/>
        <dbReference type="ChEBI" id="CHEBI:57501"/>
        <dbReference type="ChEBI" id="CHEBI:356416"/>
        <dbReference type="EC" id="5.4.3.8"/>
    </reaction>
</comment>
<comment type="cofactor">
    <cofactor evidence="1">
        <name>pyridoxal 5'-phosphate</name>
        <dbReference type="ChEBI" id="CHEBI:597326"/>
    </cofactor>
</comment>
<comment type="pathway">
    <text evidence="1">Porphyrin-containing compound metabolism; protoporphyrin-IX biosynthesis; 5-aminolevulinate from L-glutamyl-tRNA(Glu): step 2/2.</text>
</comment>
<comment type="subunit">
    <text evidence="1">Homodimer.</text>
</comment>
<comment type="subcellular location">
    <subcellularLocation>
        <location evidence="1">Cytoplasm</location>
    </subcellularLocation>
</comment>
<comment type="similarity">
    <text evidence="1">Belongs to the class-III pyridoxal-phosphate-dependent aminotransferase family. HemL subfamily.</text>
</comment>
<feature type="chain" id="PRO_1000060005" description="Glutamate-1-semialdehyde 2,1-aminomutase">
    <location>
        <begin position="1"/>
        <end position="426"/>
    </location>
</feature>
<feature type="modified residue" description="N6-(pyridoxal phosphate)lysine" evidence="1">
    <location>
        <position position="265"/>
    </location>
</feature>
<organism>
    <name type="scientific">Yersinia pseudotuberculosis serotype O:1b (strain IP 31758)</name>
    <dbReference type="NCBI Taxonomy" id="349747"/>
    <lineage>
        <taxon>Bacteria</taxon>
        <taxon>Pseudomonadati</taxon>
        <taxon>Pseudomonadota</taxon>
        <taxon>Gammaproteobacteria</taxon>
        <taxon>Enterobacterales</taxon>
        <taxon>Yersiniaceae</taxon>
        <taxon>Yersinia</taxon>
    </lineage>
</organism>
<dbReference type="EC" id="5.4.3.8" evidence="1"/>
<dbReference type="EMBL" id="CP000720">
    <property type="protein sequence ID" value="ABS48188.1"/>
    <property type="molecule type" value="Genomic_DNA"/>
</dbReference>
<dbReference type="RefSeq" id="WP_011191761.1">
    <property type="nucleotide sequence ID" value="NC_009708.1"/>
</dbReference>
<dbReference type="SMR" id="A7FM09"/>
<dbReference type="GeneID" id="49787253"/>
<dbReference type="KEGG" id="ypi:YpsIP31758_3330"/>
<dbReference type="HOGENOM" id="CLU_016922_1_5_6"/>
<dbReference type="UniPathway" id="UPA00251">
    <property type="reaction ID" value="UER00317"/>
</dbReference>
<dbReference type="Proteomes" id="UP000002412">
    <property type="component" value="Chromosome"/>
</dbReference>
<dbReference type="GO" id="GO:0005737">
    <property type="term" value="C:cytoplasm"/>
    <property type="evidence" value="ECO:0007669"/>
    <property type="project" value="UniProtKB-SubCell"/>
</dbReference>
<dbReference type="GO" id="GO:0042286">
    <property type="term" value="F:glutamate-1-semialdehyde 2,1-aminomutase activity"/>
    <property type="evidence" value="ECO:0007669"/>
    <property type="project" value="UniProtKB-UniRule"/>
</dbReference>
<dbReference type="GO" id="GO:0030170">
    <property type="term" value="F:pyridoxal phosphate binding"/>
    <property type="evidence" value="ECO:0007669"/>
    <property type="project" value="InterPro"/>
</dbReference>
<dbReference type="GO" id="GO:0008483">
    <property type="term" value="F:transaminase activity"/>
    <property type="evidence" value="ECO:0007669"/>
    <property type="project" value="InterPro"/>
</dbReference>
<dbReference type="GO" id="GO:0006782">
    <property type="term" value="P:protoporphyrinogen IX biosynthetic process"/>
    <property type="evidence" value="ECO:0007669"/>
    <property type="project" value="UniProtKB-UniRule"/>
</dbReference>
<dbReference type="CDD" id="cd00610">
    <property type="entry name" value="OAT_like"/>
    <property type="match status" value="1"/>
</dbReference>
<dbReference type="FunFam" id="3.40.640.10:FF:000021">
    <property type="entry name" value="Glutamate-1-semialdehyde 2,1-aminomutase"/>
    <property type="match status" value="1"/>
</dbReference>
<dbReference type="FunFam" id="3.90.1150.10:FF:000012">
    <property type="entry name" value="Glutamate-1-semialdehyde 2,1-aminomutase"/>
    <property type="match status" value="1"/>
</dbReference>
<dbReference type="Gene3D" id="3.90.1150.10">
    <property type="entry name" value="Aspartate Aminotransferase, domain 1"/>
    <property type="match status" value="1"/>
</dbReference>
<dbReference type="Gene3D" id="3.40.640.10">
    <property type="entry name" value="Type I PLP-dependent aspartate aminotransferase-like (Major domain)"/>
    <property type="match status" value="1"/>
</dbReference>
<dbReference type="HAMAP" id="MF_00375">
    <property type="entry name" value="HemL_aminotrans_3"/>
    <property type="match status" value="1"/>
</dbReference>
<dbReference type="InterPro" id="IPR004639">
    <property type="entry name" value="4pyrrol_synth_GluAld_NH2Trfase"/>
</dbReference>
<dbReference type="InterPro" id="IPR005814">
    <property type="entry name" value="Aminotrans_3"/>
</dbReference>
<dbReference type="InterPro" id="IPR049704">
    <property type="entry name" value="Aminotrans_3_PPA_site"/>
</dbReference>
<dbReference type="InterPro" id="IPR015424">
    <property type="entry name" value="PyrdxlP-dep_Trfase"/>
</dbReference>
<dbReference type="InterPro" id="IPR015421">
    <property type="entry name" value="PyrdxlP-dep_Trfase_major"/>
</dbReference>
<dbReference type="InterPro" id="IPR015422">
    <property type="entry name" value="PyrdxlP-dep_Trfase_small"/>
</dbReference>
<dbReference type="NCBIfam" id="TIGR00713">
    <property type="entry name" value="hemL"/>
    <property type="match status" value="1"/>
</dbReference>
<dbReference type="NCBIfam" id="NF000818">
    <property type="entry name" value="PRK00062.1"/>
    <property type="match status" value="1"/>
</dbReference>
<dbReference type="PANTHER" id="PTHR43713">
    <property type="entry name" value="GLUTAMATE-1-SEMIALDEHYDE 2,1-AMINOMUTASE"/>
    <property type="match status" value="1"/>
</dbReference>
<dbReference type="PANTHER" id="PTHR43713:SF3">
    <property type="entry name" value="GLUTAMATE-1-SEMIALDEHYDE 2,1-AMINOMUTASE 1, CHLOROPLASTIC-RELATED"/>
    <property type="match status" value="1"/>
</dbReference>
<dbReference type="Pfam" id="PF00202">
    <property type="entry name" value="Aminotran_3"/>
    <property type="match status" value="1"/>
</dbReference>
<dbReference type="SUPFAM" id="SSF53383">
    <property type="entry name" value="PLP-dependent transferases"/>
    <property type="match status" value="1"/>
</dbReference>
<dbReference type="PROSITE" id="PS00600">
    <property type="entry name" value="AA_TRANSFER_CLASS_3"/>
    <property type="match status" value="1"/>
</dbReference>
<evidence type="ECO:0000255" key="1">
    <source>
        <dbReference type="HAMAP-Rule" id="MF_00375"/>
    </source>
</evidence>
<protein>
    <recommendedName>
        <fullName evidence="1">Glutamate-1-semialdehyde 2,1-aminomutase</fullName>
        <shortName evidence="1">GSA</shortName>
        <ecNumber evidence="1">5.4.3.8</ecNumber>
    </recommendedName>
    <alternativeName>
        <fullName evidence="1">Glutamate-1-semialdehyde aminotransferase</fullName>
        <shortName evidence="1">GSA-AT</shortName>
    </alternativeName>
</protein>
<keyword id="KW-0963">Cytoplasm</keyword>
<keyword id="KW-0413">Isomerase</keyword>
<keyword id="KW-0627">Porphyrin biosynthesis</keyword>
<keyword id="KW-0663">Pyridoxal phosphate</keyword>